<comment type="function">
    <text evidence="3">Has multiple catalytic activities. Apart from catalyzing the oxidation of (+)-tartrate to oxaloglycolate, also converts meso-tartrate to D-glycerate and catalyzes the oxidative decarboxylation of D-malate to pyruvate.</text>
</comment>
<comment type="catalytic activity">
    <reaction evidence="3">
        <text>tartrate + NAD(+) = 2-hydroxy-3-oxosuccinate + NADH + H(+)</text>
        <dbReference type="Rhea" id="RHEA:18853"/>
        <dbReference type="ChEBI" id="CHEBI:15378"/>
        <dbReference type="ChEBI" id="CHEBI:30929"/>
        <dbReference type="ChEBI" id="CHEBI:57540"/>
        <dbReference type="ChEBI" id="CHEBI:57945"/>
        <dbReference type="ChEBI" id="CHEBI:58265"/>
        <dbReference type="EC" id="1.1.1.93"/>
    </reaction>
</comment>
<comment type="catalytic activity">
    <reaction evidence="3">
        <text>(2R,3S)-tartrate + NAD(+) = 2-hydroxy-3-oxosuccinate + NADH + H(+)</text>
        <dbReference type="Rhea" id="RHEA:16457"/>
        <dbReference type="ChEBI" id="CHEBI:15378"/>
        <dbReference type="ChEBI" id="CHEBI:30928"/>
        <dbReference type="ChEBI" id="CHEBI:57540"/>
        <dbReference type="ChEBI" id="CHEBI:57945"/>
        <dbReference type="ChEBI" id="CHEBI:58265"/>
        <dbReference type="EC" id="1.1.1.93"/>
    </reaction>
</comment>
<comment type="catalytic activity">
    <reaction evidence="3">
        <text>(2R,3R)-tartrate + NAD(+) = 2-hydroxy-3-oxosuccinate + NADH + H(+)</text>
        <dbReference type="Rhea" id="RHEA:15209"/>
        <dbReference type="ChEBI" id="CHEBI:15378"/>
        <dbReference type="ChEBI" id="CHEBI:30924"/>
        <dbReference type="ChEBI" id="CHEBI:57540"/>
        <dbReference type="ChEBI" id="CHEBI:57945"/>
        <dbReference type="ChEBI" id="CHEBI:58265"/>
        <dbReference type="EC" id="1.1.1.93"/>
    </reaction>
</comment>
<comment type="catalytic activity">
    <reaction evidence="3">
        <text>(2R,3R)-tartrate + H(+) = (R)-glycerate + CO2</text>
        <dbReference type="Rhea" id="RHEA:13317"/>
        <dbReference type="ChEBI" id="CHEBI:15378"/>
        <dbReference type="ChEBI" id="CHEBI:16526"/>
        <dbReference type="ChEBI" id="CHEBI:16659"/>
        <dbReference type="ChEBI" id="CHEBI:30924"/>
        <dbReference type="EC" id="4.1.1.73"/>
    </reaction>
</comment>
<comment type="catalytic activity">
    <reaction evidence="3">
        <text>(R)-malate + NAD(+) = pyruvate + CO2 + NADH</text>
        <dbReference type="Rhea" id="RHEA:18365"/>
        <dbReference type="ChEBI" id="CHEBI:15361"/>
        <dbReference type="ChEBI" id="CHEBI:15588"/>
        <dbReference type="ChEBI" id="CHEBI:16526"/>
        <dbReference type="ChEBI" id="CHEBI:57540"/>
        <dbReference type="ChEBI" id="CHEBI:57945"/>
        <dbReference type="EC" id="1.1.1.83"/>
    </reaction>
</comment>
<comment type="cofactor">
    <cofactor evidence="3">
        <name>Mg(2+)</name>
        <dbReference type="ChEBI" id="CHEBI:18420"/>
    </cofactor>
    <cofactor evidence="3">
        <name>Mn(2+)</name>
        <dbReference type="ChEBI" id="CHEBI:29035"/>
    </cofactor>
    <text evidence="2">Binds 1 Mg(2+) or Mn(2+) ion per subunit.</text>
</comment>
<comment type="cofactor">
    <cofactor evidence="3">
        <name>K(+)</name>
        <dbReference type="ChEBI" id="CHEBI:29103"/>
    </cofactor>
</comment>
<comment type="pathway">
    <text>Carbohydrate acid metabolism; tartrate degradation; 2-hydroxy-3-oxosuccinate from L-tartrate: step 1/1.</text>
</comment>
<comment type="pathway">
    <text>Carbohydrate acid metabolism; tartrate degradation; 2-hydroxy-3-oxosuccinate from meso-tartrate: step 1/1.</text>
</comment>
<comment type="pathway">
    <text>Carbohydrate acid metabolism; tartrate degradation; D-glycerate from L-tartrate: step 1/1.</text>
</comment>
<comment type="subcellular location">
    <subcellularLocation>
        <location evidence="1">Cytoplasm</location>
    </subcellularLocation>
</comment>
<comment type="induction">
    <text>By tartrate.</text>
</comment>
<comment type="similarity">
    <text evidence="4">Belongs to the isocitrate and isopropylmalate dehydrogenases family.</text>
</comment>
<sequence>MREYKIAAIPADGIGPEVIAAGLQVLEALEKRSGDFSIHTETFDWGSDYYKKNGVMMPADGLEQLKKFDAIFFGAVGAPDVPDHITLWGLRLPICQGFDQYANVRPTKVLPGITPPLRNCGPGDLDWVIVRENSEGEYSGHGGRAHKGLPEEVGTEVAIFTRVGVTRIMRYAFKLAQARPRKLLTVVTKSNAQRHGMVMWDEIAAEVSKEFPDVTWDKMLVDAMTVRMTLKPQSLDTIVATNLHADILSDLAGALAGSLGVAPTANIDPERRFPSMFEPIHGSAFDITGKGIANPVATFWTAAQMLEHLGEKDAATRLMSAVERVTEAGILTPDVGGTANTQQVTDAVCEAIAGSNIL</sequence>
<feature type="chain" id="PRO_0000083816" description="Probable tartrate dehydrogenase/decarboxylase TtuC'">
    <location>
        <begin position="1"/>
        <end position="358"/>
    </location>
</feature>
<feature type="binding site" evidence="2">
    <location>
        <position position="222"/>
    </location>
    <ligand>
        <name>Mn(2+)</name>
        <dbReference type="ChEBI" id="CHEBI:29035"/>
    </ligand>
</feature>
<feature type="binding site" evidence="2">
    <location>
        <position position="246"/>
    </location>
    <ligand>
        <name>Mn(2+)</name>
        <dbReference type="ChEBI" id="CHEBI:29035"/>
    </ligand>
</feature>
<feature type="binding site" evidence="2">
    <location>
        <position position="250"/>
    </location>
    <ligand>
        <name>Mn(2+)</name>
        <dbReference type="ChEBI" id="CHEBI:29035"/>
    </ligand>
</feature>
<name>TTUC4_AGRVI</name>
<accession>P70792</accession>
<evidence type="ECO:0000250" key="1"/>
<evidence type="ECO:0000250" key="2">
    <source>
        <dbReference type="UniProtKB" id="P37412"/>
    </source>
</evidence>
<evidence type="ECO:0000250" key="3">
    <source>
        <dbReference type="UniProtKB" id="Q51945"/>
    </source>
</evidence>
<evidence type="ECO:0000305" key="4"/>
<gene>
    <name type="primary">ttuC'</name>
</gene>
<dbReference type="EC" id="1.1.1.93" evidence="3"/>
<dbReference type="EC" id="4.1.1.73" evidence="3"/>
<dbReference type="EC" id="1.1.1.83" evidence="3"/>
<dbReference type="EMBL" id="U32375">
    <property type="protein sequence ID" value="AAB61628.1"/>
    <property type="molecule type" value="Genomic_DNA"/>
</dbReference>
<dbReference type="RefSeq" id="WP_032488981.1">
    <property type="nucleotide sequence ID" value="NZ_JABAEH010000039.1"/>
</dbReference>
<dbReference type="SMR" id="P70792"/>
<dbReference type="UniPathway" id="UPA00839">
    <property type="reaction ID" value="UER00800"/>
</dbReference>
<dbReference type="UniPathway" id="UPA00839">
    <property type="reaction ID" value="UER00801"/>
</dbReference>
<dbReference type="UniPathway" id="UPA00839">
    <property type="reaction ID" value="UER00803"/>
</dbReference>
<dbReference type="GO" id="GO:0005737">
    <property type="term" value="C:cytoplasm"/>
    <property type="evidence" value="ECO:0007669"/>
    <property type="project" value="UniProtKB-SubCell"/>
</dbReference>
<dbReference type="GO" id="GO:0046553">
    <property type="term" value="F:D-malate dehydrogenase (decarboxylating) (NAD+) activity"/>
    <property type="evidence" value="ECO:0007669"/>
    <property type="project" value="UniProtKB-EC"/>
</dbReference>
<dbReference type="GO" id="GO:0000287">
    <property type="term" value="F:magnesium ion binding"/>
    <property type="evidence" value="ECO:0007669"/>
    <property type="project" value="InterPro"/>
</dbReference>
<dbReference type="GO" id="GO:0051287">
    <property type="term" value="F:NAD binding"/>
    <property type="evidence" value="ECO:0007669"/>
    <property type="project" value="InterPro"/>
</dbReference>
<dbReference type="GO" id="GO:0050319">
    <property type="term" value="F:tartrate decarboxylase activity"/>
    <property type="evidence" value="ECO:0007669"/>
    <property type="project" value="UniProtKB-EC"/>
</dbReference>
<dbReference type="GO" id="GO:0009027">
    <property type="term" value="F:tartrate dehydrogenase activity"/>
    <property type="evidence" value="ECO:0007669"/>
    <property type="project" value="UniProtKB-EC"/>
</dbReference>
<dbReference type="Gene3D" id="3.40.718.10">
    <property type="entry name" value="Isopropylmalate Dehydrogenase"/>
    <property type="match status" value="1"/>
</dbReference>
<dbReference type="InterPro" id="IPR050501">
    <property type="entry name" value="ICDH/IPMDH"/>
</dbReference>
<dbReference type="InterPro" id="IPR019818">
    <property type="entry name" value="IsoCit/isopropylmalate_DH_CS"/>
</dbReference>
<dbReference type="InterPro" id="IPR024084">
    <property type="entry name" value="IsoPropMal-DH-like_dom"/>
</dbReference>
<dbReference type="InterPro" id="IPR011829">
    <property type="entry name" value="TTC_DH"/>
</dbReference>
<dbReference type="NCBIfam" id="TIGR02089">
    <property type="entry name" value="TTC"/>
    <property type="match status" value="1"/>
</dbReference>
<dbReference type="PANTHER" id="PTHR43275">
    <property type="entry name" value="D-MALATE DEHYDROGENASE [DECARBOXYLATING]"/>
    <property type="match status" value="1"/>
</dbReference>
<dbReference type="PANTHER" id="PTHR43275:SF1">
    <property type="entry name" value="D-MALATE DEHYDROGENASE [DECARBOXYLATING]"/>
    <property type="match status" value="1"/>
</dbReference>
<dbReference type="Pfam" id="PF00180">
    <property type="entry name" value="Iso_dh"/>
    <property type="match status" value="1"/>
</dbReference>
<dbReference type="SMART" id="SM01329">
    <property type="entry name" value="Iso_dh"/>
    <property type="match status" value="1"/>
</dbReference>
<dbReference type="SUPFAM" id="SSF53659">
    <property type="entry name" value="Isocitrate/Isopropylmalate dehydrogenase-like"/>
    <property type="match status" value="1"/>
</dbReference>
<dbReference type="PROSITE" id="PS00470">
    <property type="entry name" value="IDH_IMDH"/>
    <property type="match status" value="1"/>
</dbReference>
<protein>
    <recommendedName>
        <fullName>Probable tartrate dehydrogenase/decarboxylase TtuC'</fullName>
        <shortName>TDH</shortName>
        <ecNumber evidence="3">1.1.1.93</ecNumber>
        <ecNumber evidence="3">4.1.1.73</ecNumber>
    </recommendedName>
    <alternativeName>
        <fullName>D-malate dehydrogenase [decarboxylating]</fullName>
        <ecNumber evidence="3">1.1.1.83</ecNumber>
    </alternativeName>
</protein>
<keyword id="KW-0963">Cytoplasm</keyword>
<keyword id="KW-0456">Lyase</keyword>
<keyword id="KW-0464">Manganese</keyword>
<keyword id="KW-0479">Metal-binding</keyword>
<keyword id="KW-0520">NAD</keyword>
<keyword id="KW-0560">Oxidoreductase</keyword>
<keyword id="KW-0614">Plasmid</keyword>
<reference key="1">
    <citation type="journal article" date="1996" name="Mol. Plant Microbe Interact.">
        <title>Characterization and distribution of tartrate utilization genes in the grapevine pathogen Agrobacterium vitis.</title>
        <authorList>
            <person name="Salomone J.-Y."/>
            <person name="Crouzet P."/>
            <person name="de Ruffray P."/>
            <person name="Otten L."/>
        </authorList>
    </citation>
    <scope>NUCLEOTIDE SEQUENCE [GENOMIC DNA]</scope>
    <source>
        <strain>AB3</strain>
    </source>
</reference>
<organism>
    <name type="scientific">Agrobacterium vitis</name>
    <name type="common">Rhizobium vitis</name>
    <dbReference type="NCBI Taxonomy" id="373"/>
    <lineage>
        <taxon>Bacteria</taxon>
        <taxon>Pseudomonadati</taxon>
        <taxon>Pseudomonadota</taxon>
        <taxon>Alphaproteobacteria</taxon>
        <taxon>Hyphomicrobiales</taxon>
        <taxon>Rhizobiaceae</taxon>
        <taxon>Rhizobium/Agrobacterium group</taxon>
        <taxon>Agrobacterium</taxon>
    </lineage>
</organism>
<proteinExistence type="evidence at transcript level"/>
<geneLocation type="plasmid">
    <name>pTrAB3</name>
</geneLocation>